<feature type="chain" id="PRO_0000189166" description="1-deoxy-D-xylulose-5-phosphate synthase">
    <location>
        <begin position="1"/>
        <end position="630"/>
    </location>
</feature>
<feature type="binding site" evidence="1">
    <location>
        <position position="75"/>
    </location>
    <ligand>
        <name>thiamine diphosphate</name>
        <dbReference type="ChEBI" id="CHEBI:58937"/>
    </ligand>
</feature>
<feature type="binding site" evidence="1">
    <location>
        <begin position="116"/>
        <end position="118"/>
    </location>
    <ligand>
        <name>thiamine diphosphate</name>
        <dbReference type="ChEBI" id="CHEBI:58937"/>
    </ligand>
</feature>
<feature type="binding site" evidence="1">
    <location>
        <position position="147"/>
    </location>
    <ligand>
        <name>Mg(2+)</name>
        <dbReference type="ChEBI" id="CHEBI:18420"/>
    </ligand>
</feature>
<feature type="binding site" evidence="1">
    <location>
        <begin position="148"/>
        <end position="149"/>
    </location>
    <ligand>
        <name>thiamine diphosphate</name>
        <dbReference type="ChEBI" id="CHEBI:58937"/>
    </ligand>
</feature>
<feature type="binding site" evidence="1">
    <location>
        <position position="176"/>
    </location>
    <ligand>
        <name>Mg(2+)</name>
        <dbReference type="ChEBI" id="CHEBI:18420"/>
    </ligand>
</feature>
<feature type="binding site" evidence="1">
    <location>
        <position position="176"/>
    </location>
    <ligand>
        <name>thiamine diphosphate</name>
        <dbReference type="ChEBI" id="CHEBI:58937"/>
    </ligand>
</feature>
<feature type="binding site" evidence="1">
    <location>
        <position position="287"/>
    </location>
    <ligand>
        <name>thiamine diphosphate</name>
        <dbReference type="ChEBI" id="CHEBI:58937"/>
    </ligand>
</feature>
<feature type="binding site" evidence="1">
    <location>
        <position position="367"/>
    </location>
    <ligand>
        <name>thiamine diphosphate</name>
        <dbReference type="ChEBI" id="CHEBI:58937"/>
    </ligand>
</feature>
<reference key="1">
    <citation type="journal article" date="1998" name="Science">
        <title>Complete genome sequence of Treponema pallidum, the syphilis spirochete.</title>
        <authorList>
            <person name="Fraser C.M."/>
            <person name="Norris S.J."/>
            <person name="Weinstock G.M."/>
            <person name="White O."/>
            <person name="Sutton G.G."/>
            <person name="Dodson R.J."/>
            <person name="Gwinn M.L."/>
            <person name="Hickey E.K."/>
            <person name="Clayton R.A."/>
            <person name="Ketchum K.A."/>
            <person name="Sodergren E."/>
            <person name="Hardham J.M."/>
            <person name="McLeod M.P."/>
            <person name="Salzberg S.L."/>
            <person name="Peterson J.D."/>
            <person name="Khalak H.G."/>
            <person name="Richardson D.L."/>
            <person name="Howell J.K."/>
            <person name="Chidambaram M."/>
            <person name="Utterback T.R."/>
            <person name="McDonald L.A."/>
            <person name="Artiach P."/>
            <person name="Bowman C."/>
            <person name="Cotton M.D."/>
            <person name="Fujii C."/>
            <person name="Garland S.A."/>
            <person name="Hatch B."/>
            <person name="Horst K."/>
            <person name="Roberts K.M."/>
            <person name="Sandusky M."/>
            <person name="Weidman J.F."/>
            <person name="Smith H.O."/>
            <person name="Venter J.C."/>
        </authorList>
    </citation>
    <scope>NUCLEOTIDE SEQUENCE [LARGE SCALE GENOMIC DNA]</scope>
    <source>
        <strain>Nichols</strain>
    </source>
</reference>
<comment type="function">
    <text evidence="1">Catalyzes the acyloin condensation reaction between C atoms 2 and 3 of pyruvate and glyceraldehyde 3-phosphate to yield 1-deoxy-D-xylulose-5-phosphate (DXP).</text>
</comment>
<comment type="catalytic activity">
    <reaction evidence="1">
        <text>D-glyceraldehyde 3-phosphate + pyruvate + H(+) = 1-deoxy-D-xylulose 5-phosphate + CO2</text>
        <dbReference type="Rhea" id="RHEA:12605"/>
        <dbReference type="ChEBI" id="CHEBI:15361"/>
        <dbReference type="ChEBI" id="CHEBI:15378"/>
        <dbReference type="ChEBI" id="CHEBI:16526"/>
        <dbReference type="ChEBI" id="CHEBI:57792"/>
        <dbReference type="ChEBI" id="CHEBI:59776"/>
        <dbReference type="EC" id="2.2.1.7"/>
    </reaction>
</comment>
<comment type="cofactor">
    <cofactor evidence="1">
        <name>Mg(2+)</name>
        <dbReference type="ChEBI" id="CHEBI:18420"/>
    </cofactor>
    <text evidence="1">Binds 1 Mg(2+) ion per subunit.</text>
</comment>
<comment type="cofactor">
    <cofactor evidence="1">
        <name>thiamine diphosphate</name>
        <dbReference type="ChEBI" id="CHEBI:58937"/>
    </cofactor>
    <text evidence="1">Binds 1 thiamine pyrophosphate per subunit.</text>
</comment>
<comment type="pathway">
    <text evidence="1">Metabolic intermediate biosynthesis; 1-deoxy-D-xylulose 5-phosphate biosynthesis; 1-deoxy-D-xylulose 5-phosphate from D-glyceraldehyde 3-phosphate and pyruvate: step 1/1.</text>
</comment>
<comment type="subunit">
    <text evidence="1">Homodimer.</text>
</comment>
<comment type="similarity">
    <text evidence="1">Belongs to the transketolase family. DXPS subfamily.</text>
</comment>
<sequence>MDLSLLRSLTGPHDLKSLSPEQVRALAQEVRQEILRVVSANGGHLASNLGVVELTIALHRVFSCPHDVVVWDVGHQCYAHKLLTGRAGRFHTLRQKDGISGFPRRDESPYDAFGTGHSSTALSAASGILSALRYRGKSGKVVAVVGDGALTAGLAFEALLNVGRSCSDLIVILNDNKMSISPNTGSFSRYLSTLTVKGPYQKLKTRLRRALQTVPLVGRPACRALSRLKRSARTLLYQSNIFADFGFEYVGPLNGHHIEDLERVLNDAKKLTRPTLLHVQTVKGKGYPFAEQNPTDFHGVGPFNLAEGIVEKKDALTFTEAFSHTLLNAARTDDRVVAITAAMTGGTGLGLFSHIYPERFFDVGIAEQHAVTFAAGLACAGVKPVVAVYSTFLQRAVDQVIHDVAVQNLPVIFALDRAGAVPHDGETHQGLFDLSILRAVPNINILCPASAHELSLLFGWALAQDTPVAIRYPKALCPPEEDGFSTPVHTGRGVLITRENECNVLLVCTGGVFPEVTAAANTLARKGIFADIYNVRFVKPVDEDYFLDLVGRYRSVLFVEDGVKIGGIAEALQALLNTRHPAPCSDVLAFQDMFYPHGSRAQVLAAAGLSAPHIAARAEWLLAHSVGQIR</sequence>
<gene>
    <name evidence="1" type="primary">dxs</name>
    <name type="ordered locus">TP_0824</name>
</gene>
<keyword id="KW-0414">Isoprene biosynthesis</keyword>
<keyword id="KW-0460">Magnesium</keyword>
<keyword id="KW-0479">Metal-binding</keyword>
<keyword id="KW-1185">Reference proteome</keyword>
<keyword id="KW-0784">Thiamine biosynthesis</keyword>
<keyword id="KW-0786">Thiamine pyrophosphate</keyword>
<keyword id="KW-0808">Transferase</keyword>
<name>DXS_TREPA</name>
<evidence type="ECO:0000255" key="1">
    <source>
        <dbReference type="HAMAP-Rule" id="MF_00315"/>
    </source>
</evidence>
<proteinExistence type="inferred from homology"/>
<accession>O83796</accession>
<organism>
    <name type="scientific">Treponema pallidum (strain Nichols)</name>
    <dbReference type="NCBI Taxonomy" id="243276"/>
    <lineage>
        <taxon>Bacteria</taxon>
        <taxon>Pseudomonadati</taxon>
        <taxon>Spirochaetota</taxon>
        <taxon>Spirochaetia</taxon>
        <taxon>Spirochaetales</taxon>
        <taxon>Treponemataceae</taxon>
        <taxon>Treponema</taxon>
    </lineage>
</organism>
<dbReference type="EC" id="2.2.1.7" evidence="1"/>
<dbReference type="EMBL" id="AE000520">
    <property type="protein sequence ID" value="AAC65792.1"/>
    <property type="molecule type" value="Genomic_DNA"/>
</dbReference>
<dbReference type="PIR" id="B71276">
    <property type="entry name" value="B71276"/>
</dbReference>
<dbReference type="RefSeq" id="WP_010882268.1">
    <property type="nucleotide sequence ID" value="NC_021490.2"/>
</dbReference>
<dbReference type="SMR" id="O83796"/>
<dbReference type="IntAct" id="O83796">
    <property type="interactions" value="3"/>
</dbReference>
<dbReference type="STRING" id="243276.TP_0824"/>
<dbReference type="EnsemblBacteria" id="AAC65792">
    <property type="protein sequence ID" value="AAC65792"/>
    <property type="gene ID" value="TP_0824"/>
</dbReference>
<dbReference type="GeneID" id="93876582"/>
<dbReference type="KEGG" id="tpa:TP_0824"/>
<dbReference type="KEGG" id="tpw:TPANIC_0824"/>
<dbReference type="eggNOG" id="COG1154">
    <property type="taxonomic scope" value="Bacteria"/>
</dbReference>
<dbReference type="HOGENOM" id="CLU_009227_1_4_12"/>
<dbReference type="OrthoDB" id="9803371at2"/>
<dbReference type="UniPathway" id="UPA00064">
    <property type="reaction ID" value="UER00091"/>
</dbReference>
<dbReference type="Proteomes" id="UP000000811">
    <property type="component" value="Chromosome"/>
</dbReference>
<dbReference type="GO" id="GO:0005829">
    <property type="term" value="C:cytosol"/>
    <property type="evidence" value="ECO:0007669"/>
    <property type="project" value="TreeGrafter"/>
</dbReference>
<dbReference type="GO" id="GO:0008661">
    <property type="term" value="F:1-deoxy-D-xylulose-5-phosphate synthase activity"/>
    <property type="evidence" value="ECO:0007669"/>
    <property type="project" value="UniProtKB-UniRule"/>
</dbReference>
<dbReference type="GO" id="GO:0000287">
    <property type="term" value="F:magnesium ion binding"/>
    <property type="evidence" value="ECO:0007669"/>
    <property type="project" value="UniProtKB-UniRule"/>
</dbReference>
<dbReference type="GO" id="GO:0030976">
    <property type="term" value="F:thiamine pyrophosphate binding"/>
    <property type="evidence" value="ECO:0007669"/>
    <property type="project" value="UniProtKB-UniRule"/>
</dbReference>
<dbReference type="GO" id="GO:0052865">
    <property type="term" value="P:1-deoxy-D-xylulose 5-phosphate biosynthetic process"/>
    <property type="evidence" value="ECO:0007669"/>
    <property type="project" value="UniProtKB-UniPathway"/>
</dbReference>
<dbReference type="GO" id="GO:0019288">
    <property type="term" value="P:isopentenyl diphosphate biosynthetic process, methylerythritol 4-phosphate pathway"/>
    <property type="evidence" value="ECO:0007669"/>
    <property type="project" value="TreeGrafter"/>
</dbReference>
<dbReference type="GO" id="GO:0016114">
    <property type="term" value="P:terpenoid biosynthetic process"/>
    <property type="evidence" value="ECO:0007669"/>
    <property type="project" value="UniProtKB-UniRule"/>
</dbReference>
<dbReference type="GO" id="GO:0009228">
    <property type="term" value="P:thiamine biosynthetic process"/>
    <property type="evidence" value="ECO:0007669"/>
    <property type="project" value="UniProtKB-UniRule"/>
</dbReference>
<dbReference type="CDD" id="cd02007">
    <property type="entry name" value="TPP_DXS"/>
    <property type="match status" value="1"/>
</dbReference>
<dbReference type="CDD" id="cd07033">
    <property type="entry name" value="TPP_PYR_DXS_TK_like"/>
    <property type="match status" value="1"/>
</dbReference>
<dbReference type="Gene3D" id="3.40.50.920">
    <property type="match status" value="1"/>
</dbReference>
<dbReference type="Gene3D" id="3.40.50.970">
    <property type="match status" value="2"/>
</dbReference>
<dbReference type="HAMAP" id="MF_00315">
    <property type="entry name" value="DXP_synth"/>
    <property type="match status" value="1"/>
</dbReference>
<dbReference type="InterPro" id="IPR005477">
    <property type="entry name" value="Dxylulose-5-P_synthase"/>
</dbReference>
<dbReference type="InterPro" id="IPR029061">
    <property type="entry name" value="THDP-binding"/>
</dbReference>
<dbReference type="InterPro" id="IPR009014">
    <property type="entry name" value="Transketo_C/PFOR_II"/>
</dbReference>
<dbReference type="InterPro" id="IPR005475">
    <property type="entry name" value="Transketolase-like_Pyr-bd"/>
</dbReference>
<dbReference type="InterPro" id="IPR020826">
    <property type="entry name" value="Transketolase_BS"/>
</dbReference>
<dbReference type="InterPro" id="IPR033248">
    <property type="entry name" value="Transketolase_C"/>
</dbReference>
<dbReference type="NCBIfam" id="TIGR00204">
    <property type="entry name" value="dxs"/>
    <property type="match status" value="1"/>
</dbReference>
<dbReference type="NCBIfam" id="NF003933">
    <property type="entry name" value="PRK05444.2-2"/>
    <property type="match status" value="1"/>
</dbReference>
<dbReference type="PANTHER" id="PTHR43322">
    <property type="entry name" value="1-D-DEOXYXYLULOSE 5-PHOSPHATE SYNTHASE-RELATED"/>
    <property type="match status" value="1"/>
</dbReference>
<dbReference type="PANTHER" id="PTHR43322:SF5">
    <property type="entry name" value="1-DEOXY-D-XYLULOSE-5-PHOSPHATE SYNTHASE, CHLOROPLASTIC"/>
    <property type="match status" value="1"/>
</dbReference>
<dbReference type="Pfam" id="PF13292">
    <property type="entry name" value="DXP_synthase_N"/>
    <property type="match status" value="1"/>
</dbReference>
<dbReference type="Pfam" id="PF02779">
    <property type="entry name" value="Transket_pyr"/>
    <property type="match status" value="1"/>
</dbReference>
<dbReference type="Pfam" id="PF02780">
    <property type="entry name" value="Transketolase_C"/>
    <property type="match status" value="1"/>
</dbReference>
<dbReference type="SMART" id="SM00861">
    <property type="entry name" value="Transket_pyr"/>
    <property type="match status" value="1"/>
</dbReference>
<dbReference type="SUPFAM" id="SSF52518">
    <property type="entry name" value="Thiamin diphosphate-binding fold (THDP-binding)"/>
    <property type="match status" value="1"/>
</dbReference>
<dbReference type="SUPFAM" id="SSF52922">
    <property type="entry name" value="TK C-terminal domain-like"/>
    <property type="match status" value="1"/>
</dbReference>
<dbReference type="PROSITE" id="PS00802">
    <property type="entry name" value="TRANSKETOLASE_2"/>
    <property type="match status" value="1"/>
</dbReference>
<protein>
    <recommendedName>
        <fullName evidence="1">1-deoxy-D-xylulose-5-phosphate synthase</fullName>
        <ecNumber evidence="1">2.2.1.7</ecNumber>
    </recommendedName>
    <alternativeName>
        <fullName evidence="1">1-deoxyxylulose-5-phosphate synthase</fullName>
        <shortName evidence="1">DXP synthase</shortName>
        <shortName evidence="1">DXPS</shortName>
    </alternativeName>
</protein>